<protein>
    <recommendedName>
        <fullName>Resistin</fullName>
    </recommendedName>
    <alternativeName>
        <fullName>Adipose tissue-specific secretory factor</fullName>
        <shortName>ADSF</shortName>
    </alternativeName>
    <alternativeName>
        <fullName>C/EBP-epsilon-regulated myeloid-specific secreted cysteine-rich protein</fullName>
    </alternativeName>
    <alternativeName>
        <fullName>Cysteine-rich secreted protein A12-alpha-like 2</fullName>
    </alternativeName>
    <alternativeName>
        <fullName>Cysteine-rich secreted protein FIZZ3</fullName>
    </alternativeName>
</protein>
<reference key="1">
    <citation type="journal article" date="2000" name="EMBO J.">
        <title>FIZZ1, a novel cysteine-rich secreted protein associated with pulmonary inflammation, defines a new gene family.</title>
        <authorList>
            <person name="Holcomb I.N."/>
            <person name="Kabakoff R.C."/>
            <person name="Chan B."/>
            <person name="Baker T.W."/>
            <person name="Gurney A."/>
            <person name="Henzel W."/>
            <person name="Nelson C."/>
            <person name="Lowman H.B."/>
            <person name="Wright B.D."/>
            <person name="Skelton N.J."/>
            <person name="Frantz G.D."/>
            <person name="Tumas D.B."/>
            <person name="Peale F.V. Jr."/>
            <person name="Shelton D.L."/>
            <person name="Hebert C.C."/>
        </authorList>
    </citation>
    <scope>NUCLEOTIDE SEQUENCE [MRNA] (ISOFORM 1)</scope>
</reference>
<reference key="2">
    <citation type="journal article" date="2001" name="Nature">
        <title>The hormone resistin links obesity to diabetes.</title>
        <authorList>
            <person name="Steppan C.M."/>
            <person name="Bailey S.T."/>
            <person name="Bhat S."/>
            <person name="Brown E.J."/>
            <person name="Banerjee R.R."/>
            <person name="Wright C.M."/>
            <person name="Patel H.R."/>
            <person name="Ahima R.S."/>
            <person name="Lazar M.A."/>
        </authorList>
    </citation>
    <scope>NUCLEOTIDE SEQUENCE [MRNA] (ISOFORM 1)</scope>
    <scope>TISSUE SPECIFICITY</scope>
</reference>
<reference key="3">
    <citation type="journal article" date="2000" name="Blood">
        <title>Representational difference analysis using myeloid cells from C/EBP epsilon deletional mice.</title>
        <authorList>
            <person name="Kubota T."/>
            <person name="Kawano S."/>
            <person name="Chih D.Y."/>
            <person name="Hisatake Y."/>
            <person name="Chumakov A.M."/>
            <person name="Taguchi H."/>
            <person name="Koeffler H.P."/>
        </authorList>
    </citation>
    <scope>NUCLEOTIDE SEQUENCE [GENOMIC DNA]</scope>
</reference>
<reference key="4">
    <citation type="journal article" date="2004" name="Eur. J. Endocrinol.">
        <title>Identification of an alternative splicing transcript for the resistin gene and distribution of its mRNA in human tissue.</title>
        <authorList>
            <person name="Nohira T."/>
            <person name="Nagao K."/>
            <person name="Kameyama K."/>
            <person name="Nakai H."/>
            <person name="Fukumine N."/>
            <person name="Okabe K."/>
            <person name="Kitano S."/>
            <person name="Hisatomi H."/>
        </authorList>
    </citation>
    <scope>NUCLEOTIDE SEQUENCE [MRNA] (ISOFORM 2)</scope>
    <scope>ALTERNATIVE SPLICING</scope>
    <scope>TISSUE SPECIFICITY</scope>
</reference>
<reference key="5">
    <citation type="submission" date="2000-07" db="EMBL/GenBank/DDBJ databases">
        <title>Identification of a novel cysteine-rich secreted A12-alpha related protein.</title>
        <authorList>
            <person name="Rajala M.W."/>
            <person name="Scherer P.E."/>
        </authorList>
    </citation>
    <scope>NUCLEOTIDE SEQUENCE [MRNA] (ISOFORM 1)</scope>
</reference>
<reference key="6">
    <citation type="submission" date="2002-12" db="EMBL/GenBank/DDBJ databases">
        <title>Homo sapiens resistin mRNA found in lymphocytes.</title>
        <authorList>
            <person name="Li M."/>
            <person name="Wu Y.C."/>
            <person name="Deng Y.J."/>
            <person name="Yang J."/>
        </authorList>
    </citation>
    <scope>NUCLEOTIDE SEQUENCE [MRNA] (ISOFORM 1)</scope>
</reference>
<reference key="7">
    <citation type="journal article" date="2003" name="Genome Res.">
        <title>The secreted protein discovery initiative (SPDI), a large-scale effort to identify novel human secreted and transmembrane proteins: a bioinformatics assessment.</title>
        <authorList>
            <person name="Clark H.F."/>
            <person name="Gurney A.L."/>
            <person name="Abaya E."/>
            <person name="Baker K."/>
            <person name="Baldwin D.T."/>
            <person name="Brush J."/>
            <person name="Chen J."/>
            <person name="Chow B."/>
            <person name="Chui C."/>
            <person name="Crowley C."/>
            <person name="Currell B."/>
            <person name="Deuel B."/>
            <person name="Dowd P."/>
            <person name="Eaton D."/>
            <person name="Foster J.S."/>
            <person name="Grimaldi C."/>
            <person name="Gu Q."/>
            <person name="Hass P.E."/>
            <person name="Heldens S."/>
            <person name="Huang A."/>
            <person name="Kim H.S."/>
            <person name="Klimowski L."/>
            <person name="Jin Y."/>
            <person name="Johnson S."/>
            <person name="Lee J."/>
            <person name="Lewis L."/>
            <person name="Liao D."/>
            <person name="Mark M.R."/>
            <person name="Robbie E."/>
            <person name="Sanchez C."/>
            <person name="Schoenfeld J."/>
            <person name="Seshagiri S."/>
            <person name="Simmons L."/>
            <person name="Singh J."/>
            <person name="Smith V."/>
            <person name="Stinson J."/>
            <person name="Vagts A."/>
            <person name="Vandlen R.L."/>
            <person name="Watanabe C."/>
            <person name="Wieand D."/>
            <person name="Woods K."/>
            <person name="Xie M.-H."/>
            <person name="Yansura D.G."/>
            <person name="Yi S."/>
            <person name="Yu G."/>
            <person name="Yuan J."/>
            <person name="Zhang M."/>
            <person name="Zhang Z."/>
            <person name="Goddard A.D."/>
            <person name="Wood W.I."/>
            <person name="Godowski P.J."/>
            <person name="Gray A.M."/>
        </authorList>
    </citation>
    <scope>NUCLEOTIDE SEQUENCE [LARGE SCALE MRNA] (ISOFORM 1)</scope>
</reference>
<reference key="8">
    <citation type="submission" date="2005-11" db="EMBL/GenBank/DDBJ databases">
        <authorList>
            <consortium name="NIEHS SNPs program"/>
        </authorList>
    </citation>
    <scope>NUCLEOTIDE SEQUENCE [GENOMIC DNA]</scope>
</reference>
<reference key="9">
    <citation type="journal article" date="2004" name="Nature">
        <title>The DNA sequence and biology of human chromosome 19.</title>
        <authorList>
            <person name="Grimwood J."/>
            <person name="Gordon L.A."/>
            <person name="Olsen A.S."/>
            <person name="Terry A."/>
            <person name="Schmutz J."/>
            <person name="Lamerdin J.E."/>
            <person name="Hellsten U."/>
            <person name="Goodstein D."/>
            <person name="Couronne O."/>
            <person name="Tran-Gyamfi M."/>
            <person name="Aerts A."/>
            <person name="Altherr M."/>
            <person name="Ashworth L."/>
            <person name="Bajorek E."/>
            <person name="Black S."/>
            <person name="Branscomb E."/>
            <person name="Caenepeel S."/>
            <person name="Carrano A.V."/>
            <person name="Caoile C."/>
            <person name="Chan Y.M."/>
            <person name="Christensen M."/>
            <person name="Cleland C.A."/>
            <person name="Copeland A."/>
            <person name="Dalin E."/>
            <person name="Dehal P."/>
            <person name="Denys M."/>
            <person name="Detter J.C."/>
            <person name="Escobar J."/>
            <person name="Flowers D."/>
            <person name="Fotopulos D."/>
            <person name="Garcia C."/>
            <person name="Georgescu A.M."/>
            <person name="Glavina T."/>
            <person name="Gomez M."/>
            <person name="Gonzales E."/>
            <person name="Groza M."/>
            <person name="Hammon N."/>
            <person name="Hawkins T."/>
            <person name="Haydu L."/>
            <person name="Ho I."/>
            <person name="Huang W."/>
            <person name="Israni S."/>
            <person name="Jett J."/>
            <person name="Kadner K."/>
            <person name="Kimball H."/>
            <person name="Kobayashi A."/>
            <person name="Larionov V."/>
            <person name="Leem S.-H."/>
            <person name="Lopez F."/>
            <person name="Lou Y."/>
            <person name="Lowry S."/>
            <person name="Malfatti S."/>
            <person name="Martinez D."/>
            <person name="McCready P.M."/>
            <person name="Medina C."/>
            <person name="Morgan J."/>
            <person name="Nelson K."/>
            <person name="Nolan M."/>
            <person name="Ovcharenko I."/>
            <person name="Pitluck S."/>
            <person name="Pollard M."/>
            <person name="Popkie A.P."/>
            <person name="Predki P."/>
            <person name="Quan G."/>
            <person name="Ramirez L."/>
            <person name="Rash S."/>
            <person name="Retterer J."/>
            <person name="Rodriguez A."/>
            <person name="Rogers S."/>
            <person name="Salamov A."/>
            <person name="Salazar A."/>
            <person name="She X."/>
            <person name="Smith D."/>
            <person name="Slezak T."/>
            <person name="Solovyev V."/>
            <person name="Thayer N."/>
            <person name="Tice H."/>
            <person name="Tsai M."/>
            <person name="Ustaszewska A."/>
            <person name="Vo N."/>
            <person name="Wagner M."/>
            <person name="Wheeler J."/>
            <person name="Wu K."/>
            <person name="Xie G."/>
            <person name="Yang J."/>
            <person name="Dubchak I."/>
            <person name="Furey T.S."/>
            <person name="DeJong P."/>
            <person name="Dickson M."/>
            <person name="Gordon D."/>
            <person name="Eichler E.E."/>
            <person name="Pennacchio L.A."/>
            <person name="Richardson P."/>
            <person name="Stubbs L."/>
            <person name="Rokhsar D.S."/>
            <person name="Myers R.M."/>
            <person name="Rubin E.M."/>
            <person name="Lucas S.M."/>
        </authorList>
    </citation>
    <scope>NUCLEOTIDE SEQUENCE [LARGE SCALE GENOMIC DNA]</scope>
</reference>
<reference key="10">
    <citation type="submission" date="2005-09" db="EMBL/GenBank/DDBJ databases">
        <authorList>
            <person name="Mural R.J."/>
            <person name="Istrail S."/>
            <person name="Sutton G.G."/>
            <person name="Florea L."/>
            <person name="Halpern A.L."/>
            <person name="Mobarry C.M."/>
            <person name="Lippert R."/>
            <person name="Walenz B."/>
            <person name="Shatkay H."/>
            <person name="Dew I."/>
            <person name="Miller J.R."/>
            <person name="Flanigan M.J."/>
            <person name="Edwards N.J."/>
            <person name="Bolanos R."/>
            <person name="Fasulo D."/>
            <person name="Halldorsson B.V."/>
            <person name="Hannenhalli S."/>
            <person name="Turner R."/>
            <person name="Yooseph S."/>
            <person name="Lu F."/>
            <person name="Nusskern D.R."/>
            <person name="Shue B.C."/>
            <person name="Zheng X.H."/>
            <person name="Zhong F."/>
            <person name="Delcher A.L."/>
            <person name="Huson D.H."/>
            <person name="Kravitz S.A."/>
            <person name="Mouchard L."/>
            <person name="Reinert K."/>
            <person name="Remington K.A."/>
            <person name="Clark A.G."/>
            <person name="Waterman M.S."/>
            <person name="Eichler E.E."/>
            <person name="Adams M.D."/>
            <person name="Hunkapiller M.W."/>
            <person name="Myers E.W."/>
            <person name="Venter J.C."/>
        </authorList>
    </citation>
    <scope>NUCLEOTIDE SEQUENCE [LARGE SCALE GENOMIC DNA]</scope>
</reference>
<reference key="11">
    <citation type="journal article" date="2004" name="Genome Res.">
        <title>The status, quality, and expansion of the NIH full-length cDNA project: the Mammalian Gene Collection (MGC).</title>
        <authorList>
            <consortium name="The MGC Project Team"/>
        </authorList>
    </citation>
    <scope>NUCLEOTIDE SEQUENCE [LARGE SCALE MRNA] (ISOFORM 1)</scope>
    <source>
        <tissue>Brain</tissue>
    </source>
</reference>
<reference key="12">
    <citation type="journal article" date="2004" name="Oncogene">
        <title>Identification of murine and human XCP1 genes as C/EBP-epsilon-dependent members of FIZZ/Resistin gene family.</title>
        <authorList>
            <person name="Chumakov A.M."/>
            <person name="Kubota T."/>
            <person name="Walter S."/>
            <person name="Koeffler H.P."/>
        </authorList>
    </citation>
    <scope>FUNCTION</scope>
    <scope>INTERACTION WITH DEFA1</scope>
    <scope>TISSUE SPECIFICITY</scope>
</reference>
<reference key="13">
    <citation type="journal article" date="2015" name="Proteomics">
        <title>N-terminome analysis of the human mitochondrial proteome.</title>
        <authorList>
            <person name="Vaca Jacome A.S."/>
            <person name="Rabilloud T."/>
            <person name="Schaeffer-Reiss C."/>
            <person name="Rompais M."/>
            <person name="Ayoub D."/>
            <person name="Lane L."/>
            <person name="Bairoch A."/>
            <person name="Van Dorsselaer A."/>
            <person name="Carapito C."/>
        </authorList>
    </citation>
    <scope>IDENTIFICATION BY MASS SPECTROMETRY [LARGE SCALE ANALYSIS]</scope>
</reference>
<accession>Q9HD89</accession>
<accession>D6W649</accession>
<accession>Q540D9</accession>
<accession>Q76B53</accession>
<keyword id="KW-0025">Alternative splicing</keyword>
<keyword id="KW-0219">Diabetes mellitus</keyword>
<keyword id="KW-1015">Disulfide bond</keyword>
<keyword id="KW-0372">Hormone</keyword>
<keyword id="KW-0550">Obesity</keyword>
<keyword id="KW-1267">Proteomics identification</keyword>
<keyword id="KW-1185">Reference proteome</keyword>
<keyword id="KW-0964">Secreted</keyword>
<keyword id="KW-0732">Signal</keyword>
<feature type="signal peptide" evidence="2">
    <location>
        <begin position="1"/>
        <end position="18"/>
    </location>
</feature>
<feature type="chain" id="PRO_0000030341" description="Resistin">
    <location>
        <begin position="19"/>
        <end position="108"/>
    </location>
</feature>
<feature type="disulfide bond" description="Interchain" evidence="1">
    <location>
        <position position="22"/>
    </location>
</feature>
<feature type="disulfide bond" evidence="1">
    <location>
        <begin position="51"/>
        <end position="104"/>
    </location>
</feature>
<feature type="disulfide bond" evidence="1">
    <location>
        <begin position="63"/>
        <end position="103"/>
    </location>
</feature>
<feature type="disulfide bond" evidence="1">
    <location>
        <begin position="72"/>
        <end position="89"/>
    </location>
</feature>
<feature type="disulfide bond" evidence="1">
    <location>
        <begin position="74"/>
        <end position="91"/>
    </location>
</feature>
<feature type="disulfide bond" evidence="1">
    <location>
        <begin position="78"/>
        <end position="93"/>
    </location>
</feature>
<feature type="splice variant" id="VSP_055861" description="In isoform 2." evidence="6">
    <original>IFRAISSIGLECQSVTSRGDLATCPRG</original>
    <variation>S</variation>
    <location>
        <begin position="40"/>
        <end position="66"/>
    </location>
</feature>
<comment type="function">
    <text evidence="1 4">Hormone that seems to suppress insulin ability to stimulate glucose uptake into adipose cells (By similarity). Potentially links obesity to diabetes (By similarity). Promotes chemotaxis in myeloid cells (PubMed:15064728).</text>
</comment>
<comment type="subunit">
    <text evidence="1 4">Homodimer; disulfide-linked (By similarity). Interacts with DEFA1 (PubMed:15064728).</text>
</comment>
<comment type="interaction">
    <interactant intactId="EBI-12384280">
        <id>Q9HD89</id>
    </interactant>
    <interactant intactId="EBI-10178951">
        <id>O00155</id>
        <label>GPR25</label>
    </interactant>
    <organismsDiffer>false</organismsDiffer>
    <experiments>5</experiments>
</comment>
<comment type="subcellular location">
    <subcellularLocation>
        <location evidence="1">Secreted</location>
    </subcellularLocation>
</comment>
<comment type="alternative products">
    <event type="alternative splicing"/>
    <isoform>
        <id>Q9HD89-1</id>
        <name>1</name>
        <sequence type="displayed"/>
    </isoform>
    <isoform>
        <id>Q9HD89-2</id>
        <name>2</name>
        <name>delta2ASV</name>
        <sequence type="described" ref="VSP_055861"/>
    </isoform>
</comment>
<comment type="tissue specificity">
    <text evidence="3 4 5">Expressed in white adipose tissue (at protein level) (PubMed:11201732). Widely expressed, with particularly strong expression in lung, bone marrow, breast and peripheral blood (PubMed:15248836). Expressed strongly in bone marrow and at lower levels in lung, but not detected in other tissues (PubMed:15064728). Isoform 2 is detected in adipose tissue, bone marrow, brain, lung, peripheral blood, placenta and thymus (PubMed:15248836).</text>
</comment>
<comment type="similarity">
    <text evidence="7">Belongs to the resistin/FIZZ family.</text>
</comment>
<name>RETN_HUMAN</name>
<organism>
    <name type="scientific">Homo sapiens</name>
    <name type="common">Human</name>
    <dbReference type="NCBI Taxonomy" id="9606"/>
    <lineage>
        <taxon>Eukaryota</taxon>
        <taxon>Metazoa</taxon>
        <taxon>Chordata</taxon>
        <taxon>Craniata</taxon>
        <taxon>Vertebrata</taxon>
        <taxon>Euteleostomi</taxon>
        <taxon>Mammalia</taxon>
        <taxon>Eutheria</taxon>
        <taxon>Euarchontoglires</taxon>
        <taxon>Primates</taxon>
        <taxon>Haplorrhini</taxon>
        <taxon>Catarrhini</taxon>
        <taxon>Hominidae</taxon>
        <taxon>Homo</taxon>
    </lineage>
</organism>
<proteinExistence type="evidence at protein level"/>
<dbReference type="EMBL" id="AF205952">
    <property type="protein sequence ID" value="AAG02144.1"/>
    <property type="molecule type" value="mRNA"/>
</dbReference>
<dbReference type="EMBL" id="AF323081">
    <property type="protein sequence ID" value="AAG59824.1"/>
    <property type="molecule type" value="mRNA"/>
</dbReference>
<dbReference type="EMBL" id="AF352730">
    <property type="protein sequence ID" value="AAK18621.1"/>
    <property type="molecule type" value="Genomic_DNA"/>
</dbReference>
<dbReference type="EMBL" id="AB111910">
    <property type="protein sequence ID" value="BAD04068.1"/>
    <property type="molecule type" value="mRNA"/>
</dbReference>
<dbReference type="EMBL" id="AF290874">
    <property type="protein sequence ID" value="AAK83106.1"/>
    <property type="molecule type" value="mRNA"/>
</dbReference>
<dbReference type="EMBL" id="AY207314">
    <property type="protein sequence ID" value="AAO38860.1"/>
    <property type="molecule type" value="mRNA"/>
</dbReference>
<dbReference type="EMBL" id="AY359066">
    <property type="protein sequence ID" value="AAQ89425.1"/>
    <property type="molecule type" value="mRNA"/>
</dbReference>
<dbReference type="EMBL" id="DQ301958">
    <property type="protein sequence ID" value="ABB96251.1"/>
    <property type="molecule type" value="Genomic_DNA"/>
</dbReference>
<dbReference type="EMBL" id="AC008763">
    <property type="status" value="NOT_ANNOTATED_CDS"/>
    <property type="molecule type" value="Genomic_DNA"/>
</dbReference>
<dbReference type="EMBL" id="CH471139">
    <property type="protein sequence ID" value="EAW69015.1"/>
    <property type="molecule type" value="Genomic_DNA"/>
</dbReference>
<dbReference type="EMBL" id="CH471139">
    <property type="protein sequence ID" value="EAW69016.1"/>
    <property type="molecule type" value="Genomic_DNA"/>
</dbReference>
<dbReference type="EMBL" id="BC069302">
    <property type="protein sequence ID" value="AAH69302.1"/>
    <property type="molecule type" value="mRNA"/>
</dbReference>
<dbReference type="EMBL" id="BC101554">
    <property type="protein sequence ID" value="AAI01555.1"/>
    <property type="molecule type" value="mRNA"/>
</dbReference>
<dbReference type="EMBL" id="BC101560">
    <property type="protein sequence ID" value="AAI01561.1"/>
    <property type="molecule type" value="mRNA"/>
</dbReference>
<dbReference type="CCDS" id="CCDS12182.1">
    <molecule id="Q9HD89-1"/>
</dbReference>
<dbReference type="CCDS" id="CCDS92503.1">
    <molecule id="Q9HD89-2"/>
</dbReference>
<dbReference type="RefSeq" id="NP_001180303.1">
    <molecule id="Q9HD89-1"/>
    <property type="nucleotide sequence ID" value="NM_001193374.2"/>
</dbReference>
<dbReference type="RefSeq" id="NP_001372654.1">
    <molecule id="Q9HD89-1"/>
    <property type="nucleotide sequence ID" value="NM_001385725.1"/>
</dbReference>
<dbReference type="RefSeq" id="NP_001372656.1">
    <molecule id="Q9HD89-2"/>
    <property type="nucleotide sequence ID" value="NM_001385727.1"/>
</dbReference>
<dbReference type="RefSeq" id="NP_065148.1">
    <molecule id="Q9HD89-1"/>
    <property type="nucleotide sequence ID" value="NM_020415.4"/>
</dbReference>
<dbReference type="SMR" id="Q9HD89"/>
<dbReference type="BioGRID" id="121192">
    <property type="interactions" value="16"/>
</dbReference>
<dbReference type="FunCoup" id="Q9HD89">
    <property type="interactions" value="26"/>
</dbReference>
<dbReference type="IntAct" id="Q9HD89">
    <property type="interactions" value="6"/>
</dbReference>
<dbReference type="STRING" id="9606.ENSP00000221515"/>
<dbReference type="BindingDB" id="Q9HD89"/>
<dbReference type="BioMuta" id="RETN"/>
<dbReference type="DMDM" id="18202962"/>
<dbReference type="jPOST" id="Q9HD89"/>
<dbReference type="MassIVE" id="Q9HD89"/>
<dbReference type="PaxDb" id="9606-ENSP00000221515"/>
<dbReference type="PeptideAtlas" id="Q9HD89"/>
<dbReference type="ProteomicsDB" id="68661"/>
<dbReference type="ProteomicsDB" id="81842">
    <molecule id="Q9HD89-1"/>
</dbReference>
<dbReference type="Antibodypedia" id="12160">
    <property type="antibodies" value="919 antibodies from 38 providers"/>
</dbReference>
<dbReference type="DNASU" id="56729"/>
<dbReference type="Ensembl" id="ENST00000221515.6">
    <molecule id="Q9HD89-1"/>
    <property type="protein sequence ID" value="ENSP00000221515.1"/>
    <property type="gene ID" value="ENSG00000104918.8"/>
</dbReference>
<dbReference type="Ensembl" id="ENST00000381324.2">
    <molecule id="Q9HD89-2"/>
    <property type="protein sequence ID" value="ENSP00000370725.2"/>
    <property type="gene ID" value="ENSG00000104918.8"/>
</dbReference>
<dbReference type="Ensembl" id="ENST00000629642.1">
    <molecule id="Q9HD89-2"/>
    <property type="protein sequence ID" value="ENSP00000485998.1"/>
    <property type="gene ID" value="ENSG00000104918.8"/>
</dbReference>
<dbReference type="GeneID" id="56729"/>
<dbReference type="KEGG" id="hsa:56729"/>
<dbReference type="MANE-Select" id="ENST00000221515.6">
    <property type="protein sequence ID" value="ENSP00000221515.1"/>
    <property type="RefSeq nucleotide sequence ID" value="NM_020415.4"/>
    <property type="RefSeq protein sequence ID" value="NP_065148.1"/>
</dbReference>
<dbReference type="UCSC" id="uc002mhf.2">
    <molecule id="Q9HD89-1"/>
    <property type="organism name" value="human"/>
</dbReference>
<dbReference type="AGR" id="HGNC:20389"/>
<dbReference type="CTD" id="56729"/>
<dbReference type="DisGeNET" id="56729"/>
<dbReference type="GeneCards" id="RETN"/>
<dbReference type="HGNC" id="HGNC:20389">
    <property type="gene designation" value="RETN"/>
</dbReference>
<dbReference type="HPA" id="ENSG00000104918">
    <property type="expression patterns" value="Tissue enriched (bone)"/>
</dbReference>
<dbReference type="MalaCards" id="RETN"/>
<dbReference type="MIM" id="605565">
    <property type="type" value="gene"/>
</dbReference>
<dbReference type="neXtProt" id="NX_Q9HD89"/>
<dbReference type="OpenTargets" id="ENSG00000104918"/>
<dbReference type="PharmGKB" id="PA422"/>
<dbReference type="VEuPathDB" id="HostDB:ENSG00000104918"/>
<dbReference type="eggNOG" id="ENOG502S9XN">
    <property type="taxonomic scope" value="Eukaryota"/>
</dbReference>
<dbReference type="GeneTree" id="ENSGT00390000016177"/>
<dbReference type="InParanoid" id="Q9HD89"/>
<dbReference type="OMA" id="CQCAGID"/>
<dbReference type="OrthoDB" id="9531287at2759"/>
<dbReference type="PAN-GO" id="Q9HD89">
    <property type="GO annotations" value="1 GO annotation based on evolutionary models"/>
</dbReference>
<dbReference type="PhylomeDB" id="Q9HD89"/>
<dbReference type="TreeFam" id="TF337024"/>
<dbReference type="PathwayCommons" id="Q9HD89"/>
<dbReference type="Reactome" id="R-HSA-6798695">
    <property type="pathway name" value="Neutrophil degranulation"/>
</dbReference>
<dbReference type="Reactome" id="R-HSA-9615017">
    <property type="pathway name" value="FOXO-mediated transcription of oxidative stress, metabolic and neuronal genes"/>
</dbReference>
<dbReference type="SignaLink" id="Q9HD89"/>
<dbReference type="SIGNOR" id="Q9HD89"/>
<dbReference type="BioGRID-ORCS" id="56729">
    <property type="hits" value="11 hits in 1141 CRISPR screens"/>
</dbReference>
<dbReference type="GeneWiki" id="Resistin"/>
<dbReference type="GenomeRNAi" id="56729"/>
<dbReference type="Pharos" id="Q9HD89">
    <property type="development level" value="Tbio"/>
</dbReference>
<dbReference type="PRO" id="PR:Q9HD89"/>
<dbReference type="Proteomes" id="UP000005640">
    <property type="component" value="Chromosome 19"/>
</dbReference>
<dbReference type="RNAct" id="Q9HD89">
    <property type="molecule type" value="protein"/>
</dbReference>
<dbReference type="Bgee" id="ENSG00000104918">
    <property type="expression patterns" value="Expressed in bone marrow and 113 other cell types or tissues"/>
</dbReference>
<dbReference type="GO" id="GO:0035578">
    <property type="term" value="C:azurophil granule lumen"/>
    <property type="evidence" value="ECO:0000304"/>
    <property type="project" value="Reactome"/>
</dbReference>
<dbReference type="GO" id="GO:0070062">
    <property type="term" value="C:extracellular exosome"/>
    <property type="evidence" value="ECO:0007005"/>
    <property type="project" value="UniProtKB"/>
</dbReference>
<dbReference type="GO" id="GO:0005576">
    <property type="term" value="C:extracellular region"/>
    <property type="evidence" value="ECO:0000304"/>
    <property type="project" value="Reactome"/>
</dbReference>
<dbReference type="GO" id="GO:0005615">
    <property type="term" value="C:extracellular space"/>
    <property type="evidence" value="ECO:0000318"/>
    <property type="project" value="GO_Central"/>
</dbReference>
<dbReference type="GO" id="GO:0035580">
    <property type="term" value="C:specific granule lumen"/>
    <property type="evidence" value="ECO:0000304"/>
    <property type="project" value="Reactome"/>
</dbReference>
<dbReference type="GO" id="GO:0005179">
    <property type="term" value="F:hormone activity"/>
    <property type="evidence" value="ECO:0007669"/>
    <property type="project" value="UniProtKB-KW"/>
</dbReference>
<dbReference type="GO" id="GO:0045444">
    <property type="term" value="P:fat cell differentiation"/>
    <property type="evidence" value="ECO:0007669"/>
    <property type="project" value="Ensembl"/>
</dbReference>
<dbReference type="GO" id="GO:2000252">
    <property type="term" value="P:negative regulation of feeding behavior"/>
    <property type="evidence" value="ECO:0007669"/>
    <property type="project" value="Ensembl"/>
</dbReference>
<dbReference type="GO" id="GO:2000872">
    <property type="term" value="P:positive regulation of progesterone secretion"/>
    <property type="evidence" value="ECO:0007669"/>
    <property type="project" value="Ensembl"/>
</dbReference>
<dbReference type="GO" id="GO:0050806">
    <property type="term" value="P:positive regulation of synaptic transmission"/>
    <property type="evidence" value="ECO:0007669"/>
    <property type="project" value="Ensembl"/>
</dbReference>
<dbReference type="GO" id="GO:0032868">
    <property type="term" value="P:response to insulin"/>
    <property type="evidence" value="ECO:0007669"/>
    <property type="project" value="Ensembl"/>
</dbReference>
<dbReference type="GO" id="GO:0009612">
    <property type="term" value="P:response to mechanical stimulus"/>
    <property type="evidence" value="ECO:0007669"/>
    <property type="project" value="Ensembl"/>
</dbReference>
<dbReference type="CDD" id="cd16333">
    <property type="entry name" value="RELM"/>
    <property type="match status" value="1"/>
</dbReference>
<dbReference type="FunFam" id="2.60.40.4230:FF:000001">
    <property type="entry name" value="Resistin-like beta"/>
    <property type="match status" value="1"/>
</dbReference>
<dbReference type="Gene3D" id="2.60.40.4230">
    <property type="entry name" value="Resistin head domain"/>
    <property type="match status" value="1"/>
</dbReference>
<dbReference type="InterPro" id="IPR009714">
    <property type="entry name" value="RELM"/>
</dbReference>
<dbReference type="InterPro" id="IPR036262">
    <property type="entry name" value="Resistin-like_sf"/>
</dbReference>
<dbReference type="PANTHER" id="PTHR21101">
    <property type="entry name" value="RESISTIN"/>
    <property type="match status" value="1"/>
</dbReference>
<dbReference type="PANTHER" id="PTHR21101:SF11">
    <property type="entry name" value="RESISTIN"/>
    <property type="match status" value="1"/>
</dbReference>
<dbReference type="Pfam" id="PF06954">
    <property type="entry name" value="Resistin"/>
    <property type="match status" value="1"/>
</dbReference>
<dbReference type="SUPFAM" id="SSF111423">
    <property type="entry name" value="Resistin"/>
    <property type="match status" value="1"/>
</dbReference>
<gene>
    <name type="primary">RETN</name>
    <name type="synonym">FIZZ3</name>
    <name type="synonym">HXCP1</name>
    <name type="synonym">RSTN</name>
    <name type="ORF">UNQ407/PRO1199</name>
</gene>
<sequence length="108" mass="11419">MKALCLLLLPVLGLLVSSKTLCSMEEAINERIQEVAGSLIFRAISSIGLECQSVTSRGDLATCPRGFAVTGCTCGSACGSWDVRAETTCHCQCAGMDWTGARCCRVQP</sequence>
<evidence type="ECO:0000250" key="1">
    <source>
        <dbReference type="UniProtKB" id="Q99P87"/>
    </source>
</evidence>
<evidence type="ECO:0000255" key="2"/>
<evidence type="ECO:0000269" key="3">
    <source>
    </source>
</evidence>
<evidence type="ECO:0000269" key="4">
    <source>
    </source>
</evidence>
<evidence type="ECO:0000269" key="5">
    <source>
    </source>
</evidence>
<evidence type="ECO:0000303" key="6">
    <source>
    </source>
</evidence>
<evidence type="ECO:0000305" key="7"/>